<dbReference type="EMBL" id="AB076836">
    <property type="protein sequence ID" value="BAC75921.1"/>
    <property type="molecule type" value="Genomic_DNA"/>
</dbReference>
<dbReference type="SMR" id="Q85DD9"/>
<dbReference type="GO" id="GO:0005743">
    <property type="term" value="C:mitochondrial inner membrane"/>
    <property type="evidence" value="ECO:0007669"/>
    <property type="project" value="UniProtKB-SubCell"/>
</dbReference>
<dbReference type="GO" id="GO:0045275">
    <property type="term" value="C:respiratory chain complex III"/>
    <property type="evidence" value="ECO:0007669"/>
    <property type="project" value="InterPro"/>
</dbReference>
<dbReference type="GO" id="GO:0046872">
    <property type="term" value="F:metal ion binding"/>
    <property type="evidence" value="ECO:0007669"/>
    <property type="project" value="UniProtKB-KW"/>
</dbReference>
<dbReference type="GO" id="GO:0008121">
    <property type="term" value="F:ubiquinol-cytochrome-c reductase activity"/>
    <property type="evidence" value="ECO:0007669"/>
    <property type="project" value="InterPro"/>
</dbReference>
<dbReference type="GO" id="GO:0006122">
    <property type="term" value="P:mitochondrial electron transport, ubiquinol to cytochrome c"/>
    <property type="evidence" value="ECO:0007669"/>
    <property type="project" value="TreeGrafter"/>
</dbReference>
<dbReference type="CDD" id="cd00290">
    <property type="entry name" value="cytochrome_b_C"/>
    <property type="match status" value="1"/>
</dbReference>
<dbReference type="CDD" id="cd00284">
    <property type="entry name" value="Cytochrome_b_N"/>
    <property type="match status" value="1"/>
</dbReference>
<dbReference type="FunFam" id="1.20.810.10:FF:000002">
    <property type="entry name" value="Cytochrome b"/>
    <property type="match status" value="1"/>
</dbReference>
<dbReference type="Gene3D" id="1.20.810.10">
    <property type="entry name" value="Cytochrome Bc1 Complex, Chain C"/>
    <property type="match status" value="1"/>
</dbReference>
<dbReference type="InterPro" id="IPR005798">
    <property type="entry name" value="Cyt_b/b6_C"/>
</dbReference>
<dbReference type="InterPro" id="IPR036150">
    <property type="entry name" value="Cyt_b/b6_C_sf"/>
</dbReference>
<dbReference type="InterPro" id="IPR005797">
    <property type="entry name" value="Cyt_b/b6_N"/>
</dbReference>
<dbReference type="InterPro" id="IPR027387">
    <property type="entry name" value="Cytb/b6-like_sf"/>
</dbReference>
<dbReference type="InterPro" id="IPR030689">
    <property type="entry name" value="Cytochrome_b"/>
</dbReference>
<dbReference type="InterPro" id="IPR048260">
    <property type="entry name" value="Cytochrome_b_C_euk/bac"/>
</dbReference>
<dbReference type="InterPro" id="IPR048259">
    <property type="entry name" value="Cytochrome_b_N_euk/bac"/>
</dbReference>
<dbReference type="InterPro" id="IPR016174">
    <property type="entry name" value="Di-haem_cyt_TM"/>
</dbReference>
<dbReference type="PANTHER" id="PTHR19271">
    <property type="entry name" value="CYTOCHROME B"/>
    <property type="match status" value="1"/>
</dbReference>
<dbReference type="PANTHER" id="PTHR19271:SF16">
    <property type="entry name" value="CYTOCHROME B"/>
    <property type="match status" value="1"/>
</dbReference>
<dbReference type="Pfam" id="PF00032">
    <property type="entry name" value="Cytochrom_B_C"/>
    <property type="match status" value="1"/>
</dbReference>
<dbReference type="Pfam" id="PF00033">
    <property type="entry name" value="Cytochrome_B"/>
    <property type="match status" value="1"/>
</dbReference>
<dbReference type="PIRSF" id="PIRSF038885">
    <property type="entry name" value="COB"/>
    <property type="match status" value="1"/>
</dbReference>
<dbReference type="SUPFAM" id="SSF81648">
    <property type="entry name" value="a domain/subunit of cytochrome bc1 complex (Ubiquinol-cytochrome c reductase)"/>
    <property type="match status" value="1"/>
</dbReference>
<dbReference type="SUPFAM" id="SSF81342">
    <property type="entry name" value="Transmembrane di-heme cytochromes"/>
    <property type="match status" value="1"/>
</dbReference>
<dbReference type="PROSITE" id="PS51003">
    <property type="entry name" value="CYTB_CTER"/>
    <property type="match status" value="1"/>
</dbReference>
<dbReference type="PROSITE" id="PS51002">
    <property type="entry name" value="CYTB_NTER"/>
    <property type="match status" value="1"/>
</dbReference>
<name>CYB_DESMS</name>
<proteinExistence type="inferred from homology"/>
<sequence length="379" mass="42611">MTNIRKTHPIMKIINDSFIDLPTPSNISSWWNFGSLLGICLVIQIITGLFLAMHYTPDTMTAFSSVTHICRDVNYGWLIRYLHANGASMFFICLFLHVGRGLYYGSYMFTETWNIGVLLLFATMATAFMGYVLPWGQMSFWGATVITNLLSAIPYIGTDLVEWIWGGFSVDKATLTRFFAFHFILPFIIAAMAGVHLLFLHETGSNNPSGLLSDADKIPFHPYYTIKDTLGALALITVLSLLVLFSPDLLGDPDNYTPANPLNTPPHIKPEWYFLFAYAILRSIPNKLGGVLALVMSILVLALMPFLHTSKQRSMMFRPISQCLFWLLVADLLVLTWIGGQPVEHPFIIIGQVASILYFLLILVLMPLASIMENNLLKW</sequence>
<protein>
    <recommendedName>
        <fullName>Cytochrome b</fullName>
    </recommendedName>
    <alternativeName>
        <fullName>Complex III subunit 3</fullName>
    </alternativeName>
    <alternativeName>
        <fullName>Complex III subunit III</fullName>
    </alternativeName>
    <alternativeName>
        <fullName>Cytochrome b-c1 complex subunit 3</fullName>
    </alternativeName>
    <alternativeName>
        <fullName>Ubiquinol-cytochrome-c reductase complex cytochrome b subunit</fullName>
    </alternativeName>
</protein>
<accession>Q85DD9</accession>
<gene>
    <name type="primary">MT-CYB</name>
    <name type="synonym">COB</name>
    <name type="synonym">CYTB</name>
    <name type="synonym">MTCYB</name>
</gene>
<feature type="chain" id="PRO_0000060881" description="Cytochrome b">
    <location>
        <begin position="1"/>
        <end position="379"/>
    </location>
</feature>
<feature type="transmembrane region" description="Helical" evidence="2">
    <location>
        <begin position="33"/>
        <end position="53"/>
    </location>
</feature>
<feature type="transmembrane region" description="Helical" evidence="2">
    <location>
        <begin position="77"/>
        <end position="98"/>
    </location>
</feature>
<feature type="transmembrane region" description="Helical" evidence="2">
    <location>
        <begin position="113"/>
        <end position="133"/>
    </location>
</feature>
<feature type="transmembrane region" description="Helical" evidence="2">
    <location>
        <begin position="178"/>
        <end position="198"/>
    </location>
</feature>
<feature type="transmembrane region" description="Helical" evidence="2">
    <location>
        <begin position="226"/>
        <end position="246"/>
    </location>
</feature>
<feature type="transmembrane region" description="Helical" evidence="2">
    <location>
        <begin position="288"/>
        <end position="308"/>
    </location>
</feature>
<feature type="transmembrane region" description="Helical" evidence="2">
    <location>
        <begin position="320"/>
        <end position="340"/>
    </location>
</feature>
<feature type="transmembrane region" description="Helical" evidence="2">
    <location>
        <begin position="347"/>
        <end position="367"/>
    </location>
</feature>
<feature type="binding site" description="axial binding residue" evidence="2">
    <location>
        <position position="83"/>
    </location>
    <ligand>
        <name>heme b</name>
        <dbReference type="ChEBI" id="CHEBI:60344"/>
        <label>b562</label>
    </ligand>
    <ligandPart>
        <name>Fe</name>
        <dbReference type="ChEBI" id="CHEBI:18248"/>
    </ligandPart>
</feature>
<feature type="binding site" description="axial binding residue" evidence="2">
    <location>
        <position position="97"/>
    </location>
    <ligand>
        <name>heme b</name>
        <dbReference type="ChEBI" id="CHEBI:60344"/>
        <label>b566</label>
    </ligand>
    <ligandPart>
        <name>Fe</name>
        <dbReference type="ChEBI" id="CHEBI:18248"/>
    </ligandPart>
</feature>
<feature type="binding site" description="axial binding residue" evidence="2">
    <location>
        <position position="182"/>
    </location>
    <ligand>
        <name>heme b</name>
        <dbReference type="ChEBI" id="CHEBI:60344"/>
        <label>b562</label>
    </ligand>
    <ligandPart>
        <name>Fe</name>
        <dbReference type="ChEBI" id="CHEBI:18248"/>
    </ligandPart>
</feature>
<feature type="binding site" description="axial binding residue" evidence="2">
    <location>
        <position position="196"/>
    </location>
    <ligand>
        <name>heme b</name>
        <dbReference type="ChEBI" id="CHEBI:60344"/>
        <label>b566</label>
    </ligand>
    <ligandPart>
        <name>Fe</name>
        <dbReference type="ChEBI" id="CHEBI:18248"/>
    </ligandPart>
</feature>
<feature type="binding site" evidence="2">
    <location>
        <position position="201"/>
    </location>
    <ligand>
        <name>a ubiquinone</name>
        <dbReference type="ChEBI" id="CHEBI:16389"/>
    </ligand>
</feature>
<reference key="1">
    <citation type="journal article" date="2003" name="Mol. Phylogenet. Evol.">
        <title>Molecular phylogenetic relationships of moles, shrew moles, and desmans from the new and old worlds.</title>
        <authorList>
            <person name="Shinohara A."/>
            <person name="Campbell K.L."/>
            <person name="Suzuki H."/>
        </authorList>
    </citation>
    <scope>NUCLEOTIDE SEQUENCE [GENOMIC DNA]</scope>
    <source>
        <strain>Isolate DM-1</strain>
    </source>
</reference>
<geneLocation type="mitochondrion"/>
<keyword id="KW-0249">Electron transport</keyword>
<keyword id="KW-0349">Heme</keyword>
<keyword id="KW-0408">Iron</keyword>
<keyword id="KW-0472">Membrane</keyword>
<keyword id="KW-0479">Metal-binding</keyword>
<keyword id="KW-0496">Mitochondrion</keyword>
<keyword id="KW-0999">Mitochondrion inner membrane</keyword>
<keyword id="KW-0679">Respiratory chain</keyword>
<keyword id="KW-0812">Transmembrane</keyword>
<keyword id="KW-1133">Transmembrane helix</keyword>
<keyword id="KW-0813">Transport</keyword>
<keyword id="KW-0830">Ubiquinone</keyword>
<comment type="function">
    <text evidence="2">Component of the ubiquinol-cytochrome c reductase complex (complex III or cytochrome b-c1 complex) that is part of the mitochondrial respiratory chain. The b-c1 complex mediates electron transfer from ubiquinol to cytochrome c. Contributes to the generation of a proton gradient across the mitochondrial membrane that is then used for ATP synthesis.</text>
</comment>
<comment type="cofactor">
    <cofactor evidence="2">
        <name>heme b</name>
        <dbReference type="ChEBI" id="CHEBI:60344"/>
    </cofactor>
    <text evidence="2">Binds 2 heme b groups non-covalently.</text>
</comment>
<comment type="subunit">
    <text evidence="2">The cytochrome bc1 complex contains 11 subunits: 3 respiratory subunits (MT-CYB, CYC1 and UQCRFS1), 2 core proteins (UQCRC1 and UQCRC2) and 6 low-molecular weight proteins (UQCRH/QCR6, UQCRB/QCR7, UQCRQ/QCR8, UQCR10/QCR9, UQCR11/QCR10 and a cleavage product of UQCRFS1). This cytochrome bc1 complex then forms a dimer.</text>
</comment>
<comment type="subcellular location">
    <subcellularLocation>
        <location evidence="2">Mitochondrion inner membrane</location>
        <topology evidence="2">Multi-pass membrane protein</topology>
    </subcellularLocation>
</comment>
<comment type="miscellaneous">
    <text evidence="1">Heme 1 (or BL or b562) is low-potential and absorbs at about 562 nm, and heme 2 (or BH or b566) is high-potential and absorbs at about 566 nm.</text>
</comment>
<comment type="similarity">
    <text evidence="3 4">Belongs to the cytochrome b family.</text>
</comment>
<comment type="caution">
    <text evidence="2">The full-length protein contains only eight transmembrane helices, not nine as predicted by bioinformatics tools.</text>
</comment>
<organism>
    <name type="scientific">Desmana moschata</name>
    <name type="common">Russian desman</name>
    <name type="synonym">Castor moschatus</name>
    <dbReference type="NCBI Taxonomy" id="182682"/>
    <lineage>
        <taxon>Eukaryota</taxon>
        <taxon>Metazoa</taxon>
        <taxon>Chordata</taxon>
        <taxon>Craniata</taxon>
        <taxon>Vertebrata</taxon>
        <taxon>Euteleostomi</taxon>
        <taxon>Mammalia</taxon>
        <taxon>Eutheria</taxon>
        <taxon>Laurasiatheria</taxon>
        <taxon>Eulipotyphla</taxon>
        <taxon>Talpidae</taxon>
        <taxon>Desmana</taxon>
    </lineage>
</organism>
<evidence type="ECO:0000250" key="1"/>
<evidence type="ECO:0000250" key="2">
    <source>
        <dbReference type="UniProtKB" id="P00157"/>
    </source>
</evidence>
<evidence type="ECO:0000255" key="3">
    <source>
        <dbReference type="PROSITE-ProRule" id="PRU00967"/>
    </source>
</evidence>
<evidence type="ECO:0000255" key="4">
    <source>
        <dbReference type="PROSITE-ProRule" id="PRU00968"/>
    </source>
</evidence>